<comment type="function">
    <text evidence="2">Is required not only for elongation of protein synthesis but also for the initiation of all mRNA translation through initiator tRNA(fMet) aminoacylation.</text>
</comment>
<comment type="catalytic activity">
    <reaction evidence="2">
        <text>tRNA(Met) + L-methionine + ATP = L-methionyl-tRNA(Met) + AMP + diphosphate</text>
        <dbReference type="Rhea" id="RHEA:13481"/>
        <dbReference type="Rhea" id="RHEA-COMP:9667"/>
        <dbReference type="Rhea" id="RHEA-COMP:9698"/>
        <dbReference type="ChEBI" id="CHEBI:30616"/>
        <dbReference type="ChEBI" id="CHEBI:33019"/>
        <dbReference type="ChEBI" id="CHEBI:57844"/>
        <dbReference type="ChEBI" id="CHEBI:78442"/>
        <dbReference type="ChEBI" id="CHEBI:78530"/>
        <dbReference type="ChEBI" id="CHEBI:456215"/>
        <dbReference type="EC" id="6.1.1.10"/>
    </reaction>
</comment>
<comment type="cofactor">
    <cofactor evidence="2">
        <name>Zn(2+)</name>
        <dbReference type="ChEBI" id="CHEBI:29105"/>
    </cofactor>
    <text evidence="2">Binds 1 zinc ion per subunit.</text>
</comment>
<comment type="subunit">
    <text evidence="2">Homodimer.</text>
</comment>
<comment type="subcellular location">
    <subcellularLocation>
        <location evidence="2">Cytoplasm</location>
    </subcellularLocation>
</comment>
<comment type="similarity">
    <text evidence="2">Belongs to the class-I aminoacyl-tRNA synthetase family. MetG type 1 subfamily.</text>
</comment>
<sequence length="677" mass="76274">MTQVAKKILVTCALPYANGSIHLGHMLEHIQADVWVRYQRMRGHEVNFICADDAHGTPIMLKAQQLGITPEQMIGEMSQEHQTDFAGFNISYDNYHSTHSDENRELSELIYTRLKENGFIKNRTISQLYDPEKGMFLPDRFVKGTCPKCKSADQYGDNCEVCGATYSPTELIEPKSVVSGATPVMRDSEHFFFDLPSFSEMLQAWTRSGALQEQVANKMQEWFESGLQQWDISRDAPYFGFEIPNAPGKYFYVWLDAPIGYMGSFKNLCDKRGDTTSFDEYWKKDSDAELYHFIGKDIVYFHSLFWPAMLEGSHFRKPTNLFVHGYVTVNGAKMSKSRGTFIKASTWLKHFDADSLRYYYTAKLSSRIDDIDLNLEDFVQRVNADIVNKVVNLASRNAGFINKRFDGVLAAELADPQLYKTFTDAAAVIGEAWESREFGKAIREIMALADIANRYVDEQAPWVVAKQEGRDADLQAICSMGINLFRVLMTYLKPVLPTLSERVEAFLNSELNWDAIEQPLLGHKVNTFKALYNRIDMKQVEALVESSKEEVKAAAAPVTGPLADFPIQETITFDDFAKIDLRVALIENAEFVDGSDKLLRLTLDLGGEKRNVFSGIRSAYPDPQALIGRQTVMVANLAPRKMRFGVSEGMVMAAGPGGKDIFLLSPDDGAKPGQQVK</sequence>
<dbReference type="EC" id="6.1.1.10" evidence="2"/>
<dbReference type="EMBL" id="AE006468">
    <property type="protein sequence ID" value="AAL21058.1"/>
    <property type="molecule type" value="Genomic_DNA"/>
</dbReference>
<dbReference type="RefSeq" id="NP_461099.1">
    <property type="nucleotide sequence ID" value="NC_003197.2"/>
</dbReference>
<dbReference type="RefSeq" id="WP_000195332.1">
    <property type="nucleotide sequence ID" value="NC_003197.2"/>
</dbReference>
<dbReference type="SMR" id="Q8ZNN4"/>
<dbReference type="STRING" id="99287.STM2155"/>
<dbReference type="PaxDb" id="99287-STM2155"/>
<dbReference type="GeneID" id="1253676"/>
<dbReference type="KEGG" id="stm:STM2155"/>
<dbReference type="PATRIC" id="fig|99287.12.peg.2280"/>
<dbReference type="HOGENOM" id="CLU_009710_7_0_6"/>
<dbReference type="OMA" id="NMFLPDR"/>
<dbReference type="PhylomeDB" id="Q8ZNN4"/>
<dbReference type="BioCyc" id="SENT99287:STM2155-MONOMER"/>
<dbReference type="Proteomes" id="UP000001014">
    <property type="component" value="Chromosome"/>
</dbReference>
<dbReference type="GO" id="GO:0005829">
    <property type="term" value="C:cytosol"/>
    <property type="evidence" value="ECO:0000318"/>
    <property type="project" value="GO_Central"/>
</dbReference>
<dbReference type="GO" id="GO:0005524">
    <property type="term" value="F:ATP binding"/>
    <property type="evidence" value="ECO:0007669"/>
    <property type="project" value="UniProtKB-UniRule"/>
</dbReference>
<dbReference type="GO" id="GO:0046872">
    <property type="term" value="F:metal ion binding"/>
    <property type="evidence" value="ECO:0007669"/>
    <property type="project" value="UniProtKB-KW"/>
</dbReference>
<dbReference type="GO" id="GO:0004825">
    <property type="term" value="F:methionine-tRNA ligase activity"/>
    <property type="evidence" value="ECO:0000318"/>
    <property type="project" value="GO_Central"/>
</dbReference>
<dbReference type="GO" id="GO:0000049">
    <property type="term" value="F:tRNA binding"/>
    <property type="evidence" value="ECO:0007669"/>
    <property type="project" value="UniProtKB-KW"/>
</dbReference>
<dbReference type="GO" id="GO:0006431">
    <property type="term" value="P:methionyl-tRNA aminoacylation"/>
    <property type="evidence" value="ECO:0000318"/>
    <property type="project" value="GO_Central"/>
</dbReference>
<dbReference type="CDD" id="cd07957">
    <property type="entry name" value="Anticodon_Ia_Met"/>
    <property type="match status" value="1"/>
</dbReference>
<dbReference type="CDD" id="cd00814">
    <property type="entry name" value="MetRS_core"/>
    <property type="match status" value="1"/>
</dbReference>
<dbReference type="CDD" id="cd02800">
    <property type="entry name" value="tRNA_bind_EcMetRS_like"/>
    <property type="match status" value="1"/>
</dbReference>
<dbReference type="FunFam" id="1.10.730.10:FF:000005">
    <property type="entry name" value="Methionine--tRNA ligase"/>
    <property type="match status" value="1"/>
</dbReference>
<dbReference type="FunFam" id="2.20.28.20:FF:000001">
    <property type="entry name" value="Methionine--tRNA ligase"/>
    <property type="match status" value="1"/>
</dbReference>
<dbReference type="FunFam" id="2.40.50.140:FF:000042">
    <property type="entry name" value="Methionine--tRNA ligase"/>
    <property type="match status" value="1"/>
</dbReference>
<dbReference type="Gene3D" id="3.40.50.620">
    <property type="entry name" value="HUPs"/>
    <property type="match status" value="1"/>
</dbReference>
<dbReference type="Gene3D" id="1.10.730.10">
    <property type="entry name" value="Isoleucyl-tRNA Synthetase, Domain 1"/>
    <property type="match status" value="1"/>
</dbReference>
<dbReference type="Gene3D" id="2.20.28.20">
    <property type="entry name" value="Methionyl-tRNA synthetase, Zn-domain"/>
    <property type="match status" value="1"/>
</dbReference>
<dbReference type="Gene3D" id="2.40.50.140">
    <property type="entry name" value="Nucleic acid-binding proteins"/>
    <property type="match status" value="1"/>
</dbReference>
<dbReference type="HAMAP" id="MF_00098">
    <property type="entry name" value="Met_tRNA_synth_type1"/>
    <property type="match status" value="1"/>
</dbReference>
<dbReference type="InterPro" id="IPR001412">
    <property type="entry name" value="aa-tRNA-synth_I_CS"/>
</dbReference>
<dbReference type="InterPro" id="IPR041872">
    <property type="entry name" value="Anticodon_Met"/>
</dbReference>
<dbReference type="InterPro" id="IPR004495">
    <property type="entry name" value="Met-tRNA-synth_bsu_C"/>
</dbReference>
<dbReference type="InterPro" id="IPR023458">
    <property type="entry name" value="Met-tRNA_ligase_1"/>
</dbReference>
<dbReference type="InterPro" id="IPR014758">
    <property type="entry name" value="Met-tRNA_synth"/>
</dbReference>
<dbReference type="InterPro" id="IPR015413">
    <property type="entry name" value="Methionyl/Leucyl_tRNA_Synth"/>
</dbReference>
<dbReference type="InterPro" id="IPR033911">
    <property type="entry name" value="MetRS_core"/>
</dbReference>
<dbReference type="InterPro" id="IPR029038">
    <property type="entry name" value="MetRS_Zn"/>
</dbReference>
<dbReference type="InterPro" id="IPR012340">
    <property type="entry name" value="NA-bd_OB-fold"/>
</dbReference>
<dbReference type="InterPro" id="IPR014729">
    <property type="entry name" value="Rossmann-like_a/b/a_fold"/>
</dbReference>
<dbReference type="InterPro" id="IPR002547">
    <property type="entry name" value="tRNA-bd_dom"/>
</dbReference>
<dbReference type="InterPro" id="IPR009080">
    <property type="entry name" value="tRNAsynth_Ia_anticodon-bd"/>
</dbReference>
<dbReference type="NCBIfam" id="TIGR00398">
    <property type="entry name" value="metG"/>
    <property type="match status" value="1"/>
</dbReference>
<dbReference type="NCBIfam" id="TIGR00399">
    <property type="entry name" value="metG_C_term"/>
    <property type="match status" value="1"/>
</dbReference>
<dbReference type="NCBIfam" id="NF001100">
    <property type="entry name" value="PRK00133.1"/>
    <property type="match status" value="1"/>
</dbReference>
<dbReference type="PANTHER" id="PTHR45765">
    <property type="entry name" value="METHIONINE--TRNA LIGASE"/>
    <property type="match status" value="1"/>
</dbReference>
<dbReference type="PANTHER" id="PTHR45765:SF1">
    <property type="entry name" value="METHIONINE--TRNA LIGASE, CYTOPLASMIC"/>
    <property type="match status" value="1"/>
</dbReference>
<dbReference type="Pfam" id="PF19303">
    <property type="entry name" value="Anticodon_3"/>
    <property type="match status" value="1"/>
</dbReference>
<dbReference type="Pfam" id="PF09334">
    <property type="entry name" value="tRNA-synt_1g"/>
    <property type="match status" value="1"/>
</dbReference>
<dbReference type="Pfam" id="PF01588">
    <property type="entry name" value="tRNA_bind"/>
    <property type="match status" value="1"/>
</dbReference>
<dbReference type="PRINTS" id="PR01041">
    <property type="entry name" value="TRNASYNTHMET"/>
</dbReference>
<dbReference type="SUPFAM" id="SSF47323">
    <property type="entry name" value="Anticodon-binding domain of a subclass of class I aminoacyl-tRNA synthetases"/>
    <property type="match status" value="1"/>
</dbReference>
<dbReference type="SUPFAM" id="SSF57770">
    <property type="entry name" value="Methionyl-tRNA synthetase (MetRS), Zn-domain"/>
    <property type="match status" value="1"/>
</dbReference>
<dbReference type="SUPFAM" id="SSF50249">
    <property type="entry name" value="Nucleic acid-binding proteins"/>
    <property type="match status" value="1"/>
</dbReference>
<dbReference type="SUPFAM" id="SSF52374">
    <property type="entry name" value="Nucleotidylyl transferase"/>
    <property type="match status" value="1"/>
</dbReference>
<dbReference type="PROSITE" id="PS00178">
    <property type="entry name" value="AA_TRNA_LIGASE_I"/>
    <property type="match status" value="1"/>
</dbReference>
<dbReference type="PROSITE" id="PS50886">
    <property type="entry name" value="TRBD"/>
    <property type="match status" value="1"/>
</dbReference>
<name>SYM_SALTY</name>
<feature type="initiator methionine" description="Removed" evidence="1">
    <location>
        <position position="1"/>
    </location>
</feature>
<feature type="chain" id="PRO_0000139162" description="Methionine--tRNA ligase">
    <location>
        <begin position="2"/>
        <end position="677"/>
    </location>
</feature>
<feature type="domain" description="tRNA-binding" evidence="2">
    <location>
        <begin position="575"/>
        <end position="677"/>
    </location>
</feature>
<feature type="short sequence motif" description="'HIGH' region">
    <location>
        <begin position="15"/>
        <end position="25"/>
    </location>
</feature>
<feature type="short sequence motif" description="'KMSKS' region">
    <location>
        <begin position="333"/>
        <end position="337"/>
    </location>
</feature>
<feature type="binding site" evidence="2">
    <location>
        <position position="146"/>
    </location>
    <ligand>
        <name>Zn(2+)</name>
        <dbReference type="ChEBI" id="CHEBI:29105"/>
    </ligand>
</feature>
<feature type="binding site" evidence="2">
    <location>
        <position position="149"/>
    </location>
    <ligand>
        <name>Zn(2+)</name>
        <dbReference type="ChEBI" id="CHEBI:29105"/>
    </ligand>
</feature>
<feature type="binding site" evidence="2">
    <location>
        <position position="159"/>
    </location>
    <ligand>
        <name>Zn(2+)</name>
        <dbReference type="ChEBI" id="CHEBI:29105"/>
    </ligand>
</feature>
<feature type="binding site" evidence="2">
    <location>
        <position position="162"/>
    </location>
    <ligand>
        <name>Zn(2+)</name>
        <dbReference type="ChEBI" id="CHEBI:29105"/>
    </ligand>
</feature>
<feature type="binding site" evidence="2">
    <location>
        <position position="336"/>
    </location>
    <ligand>
        <name>ATP</name>
        <dbReference type="ChEBI" id="CHEBI:30616"/>
    </ligand>
</feature>
<evidence type="ECO:0000250" key="1"/>
<evidence type="ECO:0000255" key="2">
    <source>
        <dbReference type="HAMAP-Rule" id="MF_00098"/>
    </source>
</evidence>
<reference key="1">
    <citation type="journal article" date="2001" name="Nature">
        <title>Complete genome sequence of Salmonella enterica serovar Typhimurium LT2.</title>
        <authorList>
            <person name="McClelland M."/>
            <person name="Sanderson K.E."/>
            <person name="Spieth J."/>
            <person name="Clifton S.W."/>
            <person name="Latreille P."/>
            <person name="Courtney L."/>
            <person name="Porwollik S."/>
            <person name="Ali J."/>
            <person name="Dante M."/>
            <person name="Du F."/>
            <person name="Hou S."/>
            <person name="Layman D."/>
            <person name="Leonard S."/>
            <person name="Nguyen C."/>
            <person name="Scott K."/>
            <person name="Holmes A."/>
            <person name="Grewal N."/>
            <person name="Mulvaney E."/>
            <person name="Ryan E."/>
            <person name="Sun H."/>
            <person name="Florea L."/>
            <person name="Miller W."/>
            <person name="Stoneking T."/>
            <person name="Nhan M."/>
            <person name="Waterston R."/>
            <person name="Wilson R.K."/>
        </authorList>
    </citation>
    <scope>NUCLEOTIDE SEQUENCE [LARGE SCALE GENOMIC DNA]</scope>
    <source>
        <strain>LT2 / SGSC1412 / ATCC 700720</strain>
    </source>
</reference>
<organism>
    <name type="scientific">Salmonella typhimurium (strain LT2 / SGSC1412 / ATCC 700720)</name>
    <dbReference type="NCBI Taxonomy" id="99287"/>
    <lineage>
        <taxon>Bacteria</taxon>
        <taxon>Pseudomonadati</taxon>
        <taxon>Pseudomonadota</taxon>
        <taxon>Gammaproteobacteria</taxon>
        <taxon>Enterobacterales</taxon>
        <taxon>Enterobacteriaceae</taxon>
        <taxon>Salmonella</taxon>
    </lineage>
</organism>
<gene>
    <name evidence="2" type="primary">metG</name>
    <name type="ordered locus">STM2155</name>
</gene>
<proteinExistence type="inferred from homology"/>
<keyword id="KW-0030">Aminoacyl-tRNA synthetase</keyword>
<keyword id="KW-0067">ATP-binding</keyword>
<keyword id="KW-0963">Cytoplasm</keyword>
<keyword id="KW-0436">Ligase</keyword>
<keyword id="KW-0479">Metal-binding</keyword>
<keyword id="KW-0547">Nucleotide-binding</keyword>
<keyword id="KW-0648">Protein biosynthesis</keyword>
<keyword id="KW-1185">Reference proteome</keyword>
<keyword id="KW-0694">RNA-binding</keyword>
<keyword id="KW-0820">tRNA-binding</keyword>
<keyword id="KW-0862">Zinc</keyword>
<accession>Q8ZNN4</accession>
<protein>
    <recommendedName>
        <fullName evidence="2">Methionine--tRNA ligase</fullName>
        <ecNumber evidence="2">6.1.1.10</ecNumber>
    </recommendedName>
    <alternativeName>
        <fullName evidence="2">Methionyl-tRNA synthetase</fullName>
        <shortName evidence="2">MetRS</shortName>
    </alternativeName>
</protein>